<name>THIM_ECO45</name>
<feature type="chain" id="PRO_1000198122" description="Hydroxyethylthiazole kinase">
    <location>
        <begin position="1"/>
        <end position="262"/>
    </location>
</feature>
<feature type="binding site" evidence="1">
    <location>
        <position position="50"/>
    </location>
    <ligand>
        <name>substrate</name>
    </ligand>
</feature>
<feature type="binding site" evidence="1">
    <location>
        <position position="125"/>
    </location>
    <ligand>
        <name>ATP</name>
        <dbReference type="ChEBI" id="CHEBI:30616"/>
    </ligand>
</feature>
<feature type="binding site" evidence="1">
    <location>
        <position position="171"/>
    </location>
    <ligand>
        <name>ATP</name>
        <dbReference type="ChEBI" id="CHEBI:30616"/>
    </ligand>
</feature>
<feature type="binding site" evidence="1">
    <location>
        <position position="198"/>
    </location>
    <ligand>
        <name>substrate</name>
    </ligand>
</feature>
<proteinExistence type="inferred from homology"/>
<protein>
    <recommendedName>
        <fullName evidence="1">Hydroxyethylthiazole kinase</fullName>
        <ecNumber evidence="1">2.7.1.50</ecNumber>
    </recommendedName>
    <alternativeName>
        <fullName evidence="1">4-methyl-5-beta-hydroxyethylthiazole kinase</fullName>
        <shortName evidence="1">TH kinase</shortName>
        <shortName evidence="1">Thz kinase</shortName>
    </alternativeName>
</protein>
<dbReference type="EC" id="2.7.1.50" evidence="1"/>
<dbReference type="EMBL" id="CU928161">
    <property type="protein sequence ID" value="CAR03532.1"/>
    <property type="molecule type" value="Genomic_DNA"/>
</dbReference>
<dbReference type="RefSeq" id="WP_001195614.1">
    <property type="nucleotide sequence ID" value="NC_011742.1"/>
</dbReference>
<dbReference type="SMR" id="B7MEF9"/>
<dbReference type="KEGG" id="ecz:ECS88_2246"/>
<dbReference type="HOGENOM" id="CLU_019943_0_1_6"/>
<dbReference type="UniPathway" id="UPA00060">
    <property type="reaction ID" value="UER00139"/>
</dbReference>
<dbReference type="Proteomes" id="UP000000747">
    <property type="component" value="Chromosome"/>
</dbReference>
<dbReference type="GO" id="GO:0005524">
    <property type="term" value="F:ATP binding"/>
    <property type="evidence" value="ECO:0007669"/>
    <property type="project" value="UniProtKB-UniRule"/>
</dbReference>
<dbReference type="GO" id="GO:0004417">
    <property type="term" value="F:hydroxyethylthiazole kinase activity"/>
    <property type="evidence" value="ECO:0007669"/>
    <property type="project" value="UniProtKB-UniRule"/>
</dbReference>
<dbReference type="GO" id="GO:0000287">
    <property type="term" value="F:magnesium ion binding"/>
    <property type="evidence" value="ECO:0007669"/>
    <property type="project" value="UniProtKB-UniRule"/>
</dbReference>
<dbReference type="GO" id="GO:0009228">
    <property type="term" value="P:thiamine biosynthetic process"/>
    <property type="evidence" value="ECO:0007669"/>
    <property type="project" value="UniProtKB-KW"/>
</dbReference>
<dbReference type="GO" id="GO:0009229">
    <property type="term" value="P:thiamine diphosphate biosynthetic process"/>
    <property type="evidence" value="ECO:0007669"/>
    <property type="project" value="UniProtKB-UniRule"/>
</dbReference>
<dbReference type="CDD" id="cd01170">
    <property type="entry name" value="THZ_kinase"/>
    <property type="match status" value="1"/>
</dbReference>
<dbReference type="FunFam" id="3.40.1190.20:FF:000015">
    <property type="entry name" value="Hydroxyethylthiazole kinase"/>
    <property type="match status" value="1"/>
</dbReference>
<dbReference type="Gene3D" id="3.40.1190.20">
    <property type="match status" value="1"/>
</dbReference>
<dbReference type="HAMAP" id="MF_00228">
    <property type="entry name" value="Thz_kinase"/>
    <property type="match status" value="1"/>
</dbReference>
<dbReference type="InterPro" id="IPR000417">
    <property type="entry name" value="Hyethyz_kinase"/>
</dbReference>
<dbReference type="InterPro" id="IPR029056">
    <property type="entry name" value="Ribokinase-like"/>
</dbReference>
<dbReference type="NCBIfam" id="NF006830">
    <property type="entry name" value="PRK09355.1"/>
    <property type="match status" value="1"/>
</dbReference>
<dbReference type="NCBIfam" id="TIGR00694">
    <property type="entry name" value="thiM"/>
    <property type="match status" value="1"/>
</dbReference>
<dbReference type="Pfam" id="PF02110">
    <property type="entry name" value="HK"/>
    <property type="match status" value="1"/>
</dbReference>
<dbReference type="PIRSF" id="PIRSF000513">
    <property type="entry name" value="Thz_kinase"/>
    <property type="match status" value="1"/>
</dbReference>
<dbReference type="PRINTS" id="PR01099">
    <property type="entry name" value="HYETHTZKNASE"/>
</dbReference>
<dbReference type="SUPFAM" id="SSF53613">
    <property type="entry name" value="Ribokinase-like"/>
    <property type="match status" value="1"/>
</dbReference>
<accession>B7MEF9</accession>
<gene>
    <name evidence="1" type="primary">thiM</name>
    <name type="ordered locus">ECS88_2246</name>
</gene>
<keyword id="KW-0067">ATP-binding</keyword>
<keyword id="KW-0418">Kinase</keyword>
<keyword id="KW-0460">Magnesium</keyword>
<keyword id="KW-0479">Metal-binding</keyword>
<keyword id="KW-0547">Nucleotide-binding</keyword>
<keyword id="KW-1185">Reference proteome</keyword>
<keyword id="KW-0784">Thiamine biosynthesis</keyword>
<keyword id="KW-0808">Transferase</keyword>
<organism>
    <name type="scientific">Escherichia coli O45:K1 (strain S88 / ExPEC)</name>
    <dbReference type="NCBI Taxonomy" id="585035"/>
    <lineage>
        <taxon>Bacteria</taxon>
        <taxon>Pseudomonadati</taxon>
        <taxon>Pseudomonadota</taxon>
        <taxon>Gammaproteobacteria</taxon>
        <taxon>Enterobacterales</taxon>
        <taxon>Enterobacteriaceae</taxon>
        <taxon>Escherichia</taxon>
    </lineage>
</organism>
<sequence>MQVDLLSSAQSAHALHLFHQHSPLVHCMTNDVVQTFTANTLLALGASPAMVIETEEASQFAAIASALLINVGTLTQPRAQAMSAAVEQATRSQTPWTLDPVAVGALDYRRRFCVELLSHKPTAIRGNASEIMALAGVANGGRGVDTTDAAANAIPAAQTLARETGAIVVVTGEVDYVTDGHRIIGIHGGDPLMTKVVGTGCALSAVVAACCALPGDTLENIASACHWMKQAGERAVARSEGPGSFVPHFLDALWQLTQEVQA</sequence>
<evidence type="ECO:0000255" key="1">
    <source>
        <dbReference type="HAMAP-Rule" id="MF_00228"/>
    </source>
</evidence>
<reference key="1">
    <citation type="journal article" date="2009" name="PLoS Genet.">
        <title>Organised genome dynamics in the Escherichia coli species results in highly diverse adaptive paths.</title>
        <authorList>
            <person name="Touchon M."/>
            <person name="Hoede C."/>
            <person name="Tenaillon O."/>
            <person name="Barbe V."/>
            <person name="Baeriswyl S."/>
            <person name="Bidet P."/>
            <person name="Bingen E."/>
            <person name="Bonacorsi S."/>
            <person name="Bouchier C."/>
            <person name="Bouvet O."/>
            <person name="Calteau A."/>
            <person name="Chiapello H."/>
            <person name="Clermont O."/>
            <person name="Cruveiller S."/>
            <person name="Danchin A."/>
            <person name="Diard M."/>
            <person name="Dossat C."/>
            <person name="Karoui M.E."/>
            <person name="Frapy E."/>
            <person name="Garry L."/>
            <person name="Ghigo J.M."/>
            <person name="Gilles A.M."/>
            <person name="Johnson J."/>
            <person name="Le Bouguenec C."/>
            <person name="Lescat M."/>
            <person name="Mangenot S."/>
            <person name="Martinez-Jehanne V."/>
            <person name="Matic I."/>
            <person name="Nassif X."/>
            <person name="Oztas S."/>
            <person name="Petit M.A."/>
            <person name="Pichon C."/>
            <person name="Rouy Z."/>
            <person name="Ruf C.S."/>
            <person name="Schneider D."/>
            <person name="Tourret J."/>
            <person name="Vacherie B."/>
            <person name="Vallenet D."/>
            <person name="Medigue C."/>
            <person name="Rocha E.P.C."/>
            <person name="Denamur E."/>
        </authorList>
    </citation>
    <scope>NUCLEOTIDE SEQUENCE [LARGE SCALE GENOMIC DNA]</scope>
    <source>
        <strain>S88 / ExPEC</strain>
    </source>
</reference>
<comment type="function">
    <text evidence="1">Catalyzes the phosphorylation of the hydroxyl group of 4-methyl-5-beta-hydroxyethylthiazole (THZ).</text>
</comment>
<comment type="catalytic activity">
    <reaction evidence="1">
        <text>5-(2-hydroxyethyl)-4-methylthiazole + ATP = 4-methyl-5-(2-phosphooxyethyl)-thiazole + ADP + H(+)</text>
        <dbReference type="Rhea" id="RHEA:24212"/>
        <dbReference type="ChEBI" id="CHEBI:15378"/>
        <dbReference type="ChEBI" id="CHEBI:17957"/>
        <dbReference type="ChEBI" id="CHEBI:30616"/>
        <dbReference type="ChEBI" id="CHEBI:58296"/>
        <dbReference type="ChEBI" id="CHEBI:456216"/>
        <dbReference type="EC" id="2.7.1.50"/>
    </reaction>
</comment>
<comment type="cofactor">
    <cofactor evidence="1">
        <name>Mg(2+)</name>
        <dbReference type="ChEBI" id="CHEBI:18420"/>
    </cofactor>
</comment>
<comment type="pathway">
    <text evidence="1">Cofactor biosynthesis; thiamine diphosphate biosynthesis; 4-methyl-5-(2-phosphoethyl)-thiazole from 5-(2-hydroxyethyl)-4-methylthiazole: step 1/1.</text>
</comment>
<comment type="similarity">
    <text evidence="1">Belongs to the Thz kinase family.</text>
</comment>